<accession>A2QTU5</accession>
<name>XYLA_ASPNC</name>
<sequence length="736" mass="82593">MYFSSFLALGALVQAAAATYFAPNSTGLRIQHGFETILIQPFGYDGFRVRAWPFRPPSGNEISFIYDPPIEGYEDTAHGMSYDTATTGTEPRTLRNGNIILRTTGWGGTTAGYRLSFYRVNDDGSETLLTNEYAPLKSLNPRYYYWPGPGAEFSAEFSFSATPDEQIYGTGTQQDHMINKKGSVIDMVNFNSYIPTPVFMSNKGYAFIWNMPAEGRMEFGTLRTRFTAASTTLVDYVIVAAQPGDYDTLQQRISALTGRAPAPPDFSLGYIQSKLRYENQTEVELLAQNFHDRNIPVSMIVIDYQSWAHQGDWALDPRLWPNVAQMSARVKNLTGAEMMASLWPSVADDSVNYAALQANGLLSATRDGPGTTDSWNGSYIRNYDSTNPSARKFLWSMLKKNYYDKGIKNFWIDQADGGALGEAYENNGQSTYIESIPFTLPNVNYAAGTQLSVGKLYPWAHQQAIEEGFRNATDTKEGSACDHVSLSRSGYIGSQRFCSMIWSGDTTSVWDTLAVQVASGLSAAATGWGWWTVDAGGFEVDSTVWWSGNIDTPEYRELYVRWLAWTTFLPFMRTHGSRTCYFQDAYTCANEPWSYGASNTPIIVSYIHLRYQLGAYLKSIFNQFHLTGRSIMRPLYMDFEKTDPKISQLVSSNSNYTTQQYMFGPRLLVSPVTLPNVTEWPVYLPQTGQNNTKPWTYWWTNETYAGGQVVKVPAPLQHIPVFHLGSREELLSGNVF</sequence>
<comment type="function">
    <text evidence="4">Catalyzes the liberation of alpha-xylose from the non-reducing terminal glucose of xyloglucan oligosaccharides.</text>
</comment>
<comment type="catalytic activity">
    <reaction evidence="4">
        <text>Hydrolysis of terminal, non-reducing alpha-D-xylose residues with release of alpha-D-xylose.</text>
        <dbReference type="EC" id="3.2.1.177"/>
    </reaction>
</comment>
<comment type="biophysicochemical properties">
    <kinetics>
        <KM evidence="4">3.68 mM for isoprimeverose</KM>
        <KM evidence="4">9.78 mM for pNP-alpha-D-xyloside</KM>
    </kinetics>
    <phDependence>
        <text evidence="4">Optimum pH is 3.0-4.0.</text>
    </phDependence>
    <temperatureDependence>
        <text evidence="4">Optimum temperature is 55 degrees Celsius.</text>
    </temperatureDependence>
</comment>
<comment type="subcellular location">
    <subcellularLocation>
        <location evidence="4">Secreted</location>
    </subcellularLocation>
</comment>
<comment type="similarity">
    <text evidence="6">Belongs to the glycosyl hydrolase 31 family.</text>
</comment>
<protein>
    <recommendedName>
        <fullName evidence="5">Alpha-xylosidase A</fullName>
        <ecNumber evidence="4">3.2.1.177</ecNumber>
    </recommendedName>
</protein>
<gene>
    <name evidence="5" type="primary">axlA</name>
    <name type="ORF">An09g03300</name>
</gene>
<proteinExistence type="evidence at protein level"/>
<reference key="1">
    <citation type="journal article" date="2007" name="Nat. Biotechnol.">
        <title>Genome sequencing and analysis of the versatile cell factory Aspergillus niger CBS 513.88.</title>
        <authorList>
            <person name="Pel H.J."/>
            <person name="de Winde J.H."/>
            <person name="Archer D.B."/>
            <person name="Dyer P.S."/>
            <person name="Hofmann G."/>
            <person name="Schaap P.J."/>
            <person name="Turner G."/>
            <person name="de Vries R.P."/>
            <person name="Albang R."/>
            <person name="Albermann K."/>
            <person name="Andersen M.R."/>
            <person name="Bendtsen J.D."/>
            <person name="Benen J.A.E."/>
            <person name="van den Berg M."/>
            <person name="Breestraat S."/>
            <person name="Caddick M.X."/>
            <person name="Contreras R."/>
            <person name="Cornell M."/>
            <person name="Coutinho P.M."/>
            <person name="Danchin E.G.J."/>
            <person name="Debets A.J.M."/>
            <person name="Dekker P."/>
            <person name="van Dijck P.W.M."/>
            <person name="van Dijk A."/>
            <person name="Dijkhuizen L."/>
            <person name="Driessen A.J.M."/>
            <person name="d'Enfert C."/>
            <person name="Geysens S."/>
            <person name="Goosen C."/>
            <person name="Groot G.S.P."/>
            <person name="de Groot P.W.J."/>
            <person name="Guillemette T."/>
            <person name="Henrissat B."/>
            <person name="Herweijer M."/>
            <person name="van den Hombergh J.P.T.W."/>
            <person name="van den Hondel C.A.M.J.J."/>
            <person name="van der Heijden R.T.J.M."/>
            <person name="van der Kaaij R.M."/>
            <person name="Klis F.M."/>
            <person name="Kools H.J."/>
            <person name="Kubicek C.P."/>
            <person name="van Kuyk P.A."/>
            <person name="Lauber J."/>
            <person name="Lu X."/>
            <person name="van der Maarel M.J.E.C."/>
            <person name="Meulenberg R."/>
            <person name="Menke H."/>
            <person name="Mortimer M.A."/>
            <person name="Nielsen J."/>
            <person name="Oliver S.G."/>
            <person name="Olsthoorn M."/>
            <person name="Pal K."/>
            <person name="van Peij N.N.M.E."/>
            <person name="Ram A.F.J."/>
            <person name="Rinas U."/>
            <person name="Roubos J.A."/>
            <person name="Sagt C.M.J."/>
            <person name="Schmoll M."/>
            <person name="Sun J."/>
            <person name="Ussery D."/>
            <person name="Varga J."/>
            <person name="Vervecken W."/>
            <person name="van de Vondervoort P.J.J."/>
            <person name="Wedler H."/>
            <person name="Woesten H.A.B."/>
            <person name="Zeng A.-P."/>
            <person name="van Ooyen A.J.J."/>
            <person name="Visser J."/>
            <person name="Stam H."/>
        </authorList>
    </citation>
    <scope>NUCLEOTIDE SEQUENCE [LARGE SCALE GENOMIC DNA]</scope>
    <source>
        <strain>ATCC MYA-4892 / CBS 513.88 / FGSC A1513</strain>
    </source>
</reference>
<reference key="2">
    <citation type="journal article" date="2011" name="J. Biol. Chem.">
        <title>Biochemical and molecular characterization of secreted alpha-xylosidase from Aspergillus niger.</title>
        <authorList>
            <person name="Scott-Craig J.S."/>
            <person name="Borrusch M.S."/>
            <person name="Banerjee G."/>
            <person name="Harvey C.M."/>
            <person name="Walton J.D."/>
        </authorList>
    </citation>
    <scope>FUNCTION</scope>
    <scope>CATALYTIC ACTIVITY</scope>
    <scope>BIOPHYSICOCHEMICAL PROPERTIES</scope>
    <scope>SUBCELLULAR LOCATION</scope>
</reference>
<keyword id="KW-0002">3D-structure</keyword>
<keyword id="KW-0325">Glycoprotein</keyword>
<keyword id="KW-0326">Glycosidase</keyword>
<keyword id="KW-0378">Hydrolase</keyword>
<keyword id="KW-1185">Reference proteome</keyword>
<keyword id="KW-0964">Secreted</keyword>
<keyword id="KW-0732">Signal</keyword>
<organism>
    <name type="scientific">Aspergillus niger (strain ATCC MYA-4892 / CBS 513.88 / FGSC A1513)</name>
    <dbReference type="NCBI Taxonomy" id="425011"/>
    <lineage>
        <taxon>Eukaryota</taxon>
        <taxon>Fungi</taxon>
        <taxon>Dikarya</taxon>
        <taxon>Ascomycota</taxon>
        <taxon>Pezizomycotina</taxon>
        <taxon>Eurotiomycetes</taxon>
        <taxon>Eurotiomycetidae</taxon>
        <taxon>Eurotiales</taxon>
        <taxon>Aspergillaceae</taxon>
        <taxon>Aspergillus</taxon>
        <taxon>Aspergillus subgen. Circumdati</taxon>
    </lineage>
</organism>
<dbReference type="EC" id="3.2.1.177" evidence="4"/>
<dbReference type="EMBL" id="AM270197">
    <property type="protein sequence ID" value="CAK40270.1"/>
    <property type="molecule type" value="Genomic_DNA"/>
</dbReference>
<dbReference type="RefSeq" id="XP_001393647.1">
    <property type="nucleotide sequence ID" value="XM_001393610.1"/>
</dbReference>
<dbReference type="PDB" id="6DRU">
    <property type="method" value="X-ray"/>
    <property type="resolution" value="2.70 A"/>
    <property type="chains" value="A/B=19-736"/>
</dbReference>
<dbReference type="PDBsum" id="6DRU"/>
<dbReference type="SMR" id="A2QTU5"/>
<dbReference type="CAZy" id="GH31">
    <property type="family name" value="Glycoside Hydrolase Family 31"/>
</dbReference>
<dbReference type="GlyCosmos" id="A2QTU5">
    <property type="glycosylation" value="9 sites, No reported glycans"/>
</dbReference>
<dbReference type="EnsemblFungi" id="CAK40270">
    <property type="protein sequence ID" value="CAK40270"/>
    <property type="gene ID" value="An09g03300"/>
</dbReference>
<dbReference type="GeneID" id="4983866"/>
<dbReference type="KEGG" id="ang:An09g03300"/>
<dbReference type="VEuPathDB" id="FungiDB:An09g03300"/>
<dbReference type="HOGENOM" id="CLU_000631_7_3_1"/>
<dbReference type="Proteomes" id="UP000006706">
    <property type="component" value="Chromosome 1L"/>
</dbReference>
<dbReference type="GO" id="GO:0005576">
    <property type="term" value="C:extracellular region"/>
    <property type="evidence" value="ECO:0000314"/>
    <property type="project" value="AspGD"/>
</dbReference>
<dbReference type="GO" id="GO:0016020">
    <property type="term" value="C:membrane"/>
    <property type="evidence" value="ECO:0000314"/>
    <property type="project" value="AspGD"/>
</dbReference>
<dbReference type="GO" id="GO:0061634">
    <property type="term" value="F:alpha-D-xyloside xylohydrolase"/>
    <property type="evidence" value="ECO:0007669"/>
    <property type="project" value="UniProtKB-EC"/>
</dbReference>
<dbReference type="GO" id="GO:0030246">
    <property type="term" value="F:carbohydrate binding"/>
    <property type="evidence" value="ECO:0007669"/>
    <property type="project" value="InterPro"/>
</dbReference>
<dbReference type="GO" id="GO:0005975">
    <property type="term" value="P:carbohydrate metabolic process"/>
    <property type="evidence" value="ECO:0000314"/>
    <property type="project" value="AspGD"/>
</dbReference>
<dbReference type="CDD" id="cd14752">
    <property type="entry name" value="GH31_N"/>
    <property type="match status" value="1"/>
</dbReference>
<dbReference type="FunFam" id="2.60.40.1180:FF:000041">
    <property type="entry name" value="Alpha-xylosidase A"/>
    <property type="match status" value="1"/>
</dbReference>
<dbReference type="FunFam" id="2.60.40.1760:FF:000008">
    <property type="entry name" value="Alpha-xylosidase A"/>
    <property type="match status" value="1"/>
</dbReference>
<dbReference type="FunFam" id="3.20.20.80:FF:000142">
    <property type="entry name" value="Alpha-xylosidase A"/>
    <property type="match status" value="1"/>
</dbReference>
<dbReference type="Gene3D" id="3.20.20.80">
    <property type="entry name" value="Glycosidases"/>
    <property type="match status" value="1"/>
</dbReference>
<dbReference type="Gene3D" id="2.60.40.1760">
    <property type="entry name" value="glycosyl hydrolase (family 31)"/>
    <property type="match status" value="1"/>
</dbReference>
<dbReference type="Gene3D" id="2.60.40.1180">
    <property type="entry name" value="Golgi alpha-mannosidase II"/>
    <property type="match status" value="1"/>
</dbReference>
<dbReference type="InterPro" id="IPR011013">
    <property type="entry name" value="Gal_mutarotase_sf_dom"/>
</dbReference>
<dbReference type="InterPro" id="IPR048395">
    <property type="entry name" value="Glyco_hydro_31_C"/>
</dbReference>
<dbReference type="InterPro" id="IPR000322">
    <property type="entry name" value="Glyco_hydro_31_TIM"/>
</dbReference>
<dbReference type="InterPro" id="IPR013780">
    <property type="entry name" value="Glyco_hydro_b"/>
</dbReference>
<dbReference type="InterPro" id="IPR017853">
    <property type="entry name" value="Glycoside_hydrolase_SF"/>
</dbReference>
<dbReference type="InterPro" id="IPR051816">
    <property type="entry name" value="Glycosyl_Hydrolase_31"/>
</dbReference>
<dbReference type="PANTHER" id="PTHR43863">
    <property type="entry name" value="HYDROLASE, PUTATIVE (AFU_ORTHOLOGUE AFUA_1G03140)-RELATED"/>
    <property type="match status" value="1"/>
</dbReference>
<dbReference type="PANTHER" id="PTHR43863:SF2">
    <property type="entry name" value="MALTASE-GLUCOAMYLASE"/>
    <property type="match status" value="1"/>
</dbReference>
<dbReference type="Pfam" id="PF01055">
    <property type="entry name" value="Glyco_hydro_31_2nd"/>
    <property type="match status" value="1"/>
</dbReference>
<dbReference type="Pfam" id="PF21365">
    <property type="entry name" value="Glyco_hydro_31_3rd"/>
    <property type="match status" value="1"/>
</dbReference>
<dbReference type="SUPFAM" id="SSF51445">
    <property type="entry name" value="(Trans)glycosidases"/>
    <property type="match status" value="1"/>
</dbReference>
<dbReference type="SUPFAM" id="SSF74650">
    <property type="entry name" value="Galactose mutarotase-like"/>
    <property type="match status" value="1"/>
</dbReference>
<dbReference type="SUPFAM" id="SSF51011">
    <property type="entry name" value="Glycosyl hydrolase domain"/>
    <property type="match status" value="1"/>
</dbReference>
<feature type="signal peptide" evidence="2">
    <location>
        <begin position="1"/>
        <end position="18"/>
    </location>
</feature>
<feature type="chain" id="PRO_5000220438" description="Alpha-xylosidase A" evidence="2">
    <location>
        <begin position="19"/>
        <end position="736"/>
    </location>
</feature>
<feature type="active site" evidence="1">
    <location>
        <position position="413"/>
    </location>
</feature>
<feature type="active site" description="Proton donor" evidence="1">
    <location>
        <position position="505"/>
    </location>
</feature>
<feature type="glycosylation site" description="N-linked (GlcNAc...) asparagine" evidence="3">
    <location>
        <position position="24"/>
    </location>
</feature>
<feature type="glycosylation site" description="N-linked (GlcNAc...) asparagine" evidence="3">
    <location>
        <position position="279"/>
    </location>
</feature>
<feature type="glycosylation site" description="N-linked (GlcNAc...) asparagine" evidence="3">
    <location>
        <position position="332"/>
    </location>
</feature>
<feature type="glycosylation site" description="N-linked (GlcNAc...) asparagine" evidence="3">
    <location>
        <position position="376"/>
    </location>
</feature>
<feature type="glycosylation site" description="N-linked (GlcNAc...) asparagine" evidence="3">
    <location>
        <position position="471"/>
    </location>
</feature>
<feature type="glycosylation site" description="N-linked (GlcNAc...) asparagine" evidence="3">
    <location>
        <position position="655"/>
    </location>
</feature>
<feature type="glycosylation site" description="N-linked (GlcNAc...) asparagine" evidence="3">
    <location>
        <position position="676"/>
    </location>
</feature>
<feature type="glycosylation site" description="N-linked (GlcNAc...) asparagine" evidence="3">
    <location>
        <position position="690"/>
    </location>
</feature>
<feature type="glycosylation site" description="N-linked (GlcNAc...) asparagine" evidence="3">
    <location>
        <position position="701"/>
    </location>
</feature>
<feature type="strand" evidence="7">
    <location>
        <begin position="28"/>
        <end position="32"/>
    </location>
</feature>
<feature type="strand" evidence="7">
    <location>
        <begin position="35"/>
        <end position="41"/>
    </location>
</feature>
<feature type="strand" evidence="7">
    <location>
        <begin position="46"/>
        <end position="55"/>
    </location>
</feature>
<feature type="strand" evidence="7">
    <location>
        <begin position="70"/>
        <end position="73"/>
    </location>
</feature>
<feature type="strand" evidence="7">
    <location>
        <begin position="83"/>
        <end position="86"/>
    </location>
</feature>
<feature type="strand" evidence="7">
    <location>
        <begin position="88"/>
        <end position="90"/>
    </location>
</feature>
<feature type="strand" evidence="7">
    <location>
        <begin position="92"/>
        <end position="96"/>
    </location>
</feature>
<feature type="strand" evidence="7">
    <location>
        <begin position="99"/>
        <end position="104"/>
    </location>
</feature>
<feature type="strand" evidence="7">
    <location>
        <begin position="112"/>
        <end position="114"/>
    </location>
</feature>
<feature type="strand" evidence="7">
    <location>
        <begin position="116"/>
        <end position="120"/>
    </location>
</feature>
<feature type="strand" evidence="7">
    <location>
        <begin position="126"/>
        <end position="132"/>
    </location>
</feature>
<feature type="strand" evidence="7">
    <location>
        <begin position="136"/>
        <end position="138"/>
    </location>
</feature>
<feature type="strand" evidence="7">
    <location>
        <begin position="141"/>
        <end position="145"/>
    </location>
</feature>
<feature type="strand" evidence="7">
    <location>
        <begin position="148"/>
        <end position="151"/>
    </location>
</feature>
<feature type="strand" evidence="7">
    <location>
        <begin position="153"/>
        <end position="160"/>
    </location>
</feature>
<feature type="strand" evidence="7">
    <location>
        <begin position="167"/>
        <end position="172"/>
    </location>
</feature>
<feature type="strand" evidence="7">
    <location>
        <begin position="174"/>
        <end position="176"/>
    </location>
</feature>
<feature type="strand" evidence="7">
    <location>
        <begin position="184"/>
        <end position="186"/>
    </location>
</feature>
<feature type="strand" evidence="7">
    <location>
        <begin position="193"/>
        <end position="201"/>
    </location>
</feature>
<feature type="turn" evidence="7">
    <location>
        <begin position="202"/>
        <end position="204"/>
    </location>
</feature>
<feature type="strand" evidence="7">
    <location>
        <begin position="205"/>
        <end position="209"/>
    </location>
</feature>
<feature type="strand" evidence="7">
    <location>
        <begin position="215"/>
        <end position="219"/>
    </location>
</feature>
<feature type="strand" evidence="7">
    <location>
        <begin position="221"/>
        <end position="232"/>
    </location>
</feature>
<feature type="strand" evidence="7">
    <location>
        <begin position="234"/>
        <end position="240"/>
    </location>
</feature>
<feature type="helix" evidence="7">
    <location>
        <begin position="246"/>
        <end position="257"/>
    </location>
</feature>
<feature type="helix" evidence="7">
    <location>
        <begin position="265"/>
        <end position="268"/>
    </location>
</feature>
<feature type="strand" evidence="7">
    <location>
        <begin position="269"/>
        <end position="272"/>
    </location>
</feature>
<feature type="helix" evidence="7">
    <location>
        <begin position="280"/>
        <end position="292"/>
    </location>
</feature>
<feature type="strand" evidence="7">
    <location>
        <begin position="298"/>
        <end position="302"/>
    </location>
</feature>
<feature type="strand" evidence="7">
    <location>
        <begin position="307"/>
        <end position="309"/>
    </location>
</feature>
<feature type="turn" evidence="7">
    <location>
        <begin position="317"/>
        <end position="319"/>
    </location>
</feature>
<feature type="helix" evidence="7">
    <location>
        <begin position="323"/>
        <end position="334"/>
    </location>
</feature>
<feature type="strand" evidence="7">
    <location>
        <begin position="337"/>
        <end position="342"/>
    </location>
</feature>
<feature type="strand" evidence="7">
    <location>
        <begin position="344"/>
        <end position="346"/>
    </location>
</feature>
<feature type="helix" evidence="7">
    <location>
        <begin position="353"/>
        <end position="358"/>
    </location>
</feature>
<feature type="strand" evidence="7">
    <location>
        <begin position="364"/>
        <end position="369"/>
    </location>
</feature>
<feature type="strand" evidence="7">
    <location>
        <begin position="373"/>
        <end position="375"/>
    </location>
</feature>
<feature type="strand" evidence="7">
    <location>
        <begin position="378"/>
        <end position="383"/>
    </location>
</feature>
<feature type="helix" evidence="7">
    <location>
        <begin position="388"/>
        <end position="401"/>
    </location>
</feature>
<feature type="helix" evidence="7">
    <location>
        <begin position="403"/>
        <end position="405"/>
    </location>
</feature>
<feature type="strand" evidence="7">
    <location>
        <begin position="409"/>
        <end position="412"/>
    </location>
</feature>
<feature type="strand" evidence="7">
    <location>
        <begin position="416"/>
        <end position="426"/>
    </location>
</feature>
<feature type="helix" evidence="7">
    <location>
        <begin position="431"/>
        <end position="435"/>
    </location>
</feature>
<feature type="helix" evidence="7">
    <location>
        <begin position="450"/>
        <end position="453"/>
    </location>
</feature>
<feature type="helix" evidence="7">
    <location>
        <begin position="454"/>
        <end position="456"/>
    </location>
</feature>
<feature type="helix" evidence="7">
    <location>
        <begin position="457"/>
        <end position="473"/>
    </location>
</feature>
<feature type="strand" evidence="7">
    <location>
        <begin position="485"/>
        <end position="488"/>
    </location>
</feature>
<feature type="helix" evidence="7">
    <location>
        <begin position="494"/>
        <end position="496"/>
    </location>
</feature>
<feature type="strand" evidence="7">
    <location>
        <begin position="497"/>
        <end position="502"/>
    </location>
</feature>
<feature type="strand" evidence="7">
    <location>
        <begin position="507"/>
        <end position="509"/>
    </location>
</feature>
<feature type="helix" evidence="7">
    <location>
        <begin position="510"/>
        <end position="526"/>
    </location>
</feature>
<feature type="turn" evidence="7">
    <location>
        <begin position="545"/>
        <end position="548"/>
    </location>
</feature>
<feature type="helix" evidence="7">
    <location>
        <begin position="553"/>
        <end position="566"/>
    </location>
</feature>
<feature type="strand" evidence="7">
    <location>
        <begin position="569"/>
        <end position="574"/>
    </location>
</feature>
<feature type="strand" evidence="7">
    <location>
        <begin position="585"/>
        <end position="587"/>
    </location>
</feature>
<feature type="turn" evidence="7">
    <location>
        <begin position="597"/>
        <end position="599"/>
    </location>
</feature>
<feature type="helix" evidence="7">
    <location>
        <begin position="600"/>
        <end position="612"/>
    </location>
</feature>
<feature type="helix" evidence="7">
    <location>
        <begin position="614"/>
        <end position="627"/>
    </location>
</feature>
<feature type="strand" evidence="7">
    <location>
        <begin position="631"/>
        <end position="633"/>
    </location>
</feature>
<feature type="helix" evidence="7">
    <location>
        <begin position="636"/>
        <end position="639"/>
    </location>
</feature>
<feature type="turn" evidence="7">
    <location>
        <begin position="640"/>
        <end position="642"/>
    </location>
</feature>
<feature type="helix" evidence="7">
    <location>
        <begin position="646"/>
        <end position="651"/>
    </location>
</feature>
<feature type="helix" evidence="7">
    <location>
        <begin position="655"/>
        <end position="658"/>
    </location>
</feature>
<feature type="strand" evidence="7">
    <location>
        <begin position="661"/>
        <end position="663"/>
    </location>
</feature>
<feature type="turn" evidence="7">
    <location>
        <begin position="664"/>
        <end position="666"/>
    </location>
</feature>
<feature type="strand" evidence="7">
    <location>
        <begin position="667"/>
        <end position="669"/>
    </location>
</feature>
<feature type="strand" evidence="7">
    <location>
        <begin position="674"/>
        <end position="676"/>
    </location>
</feature>
<feature type="strand" evidence="7">
    <location>
        <begin position="678"/>
        <end position="684"/>
    </location>
</feature>
<feature type="strand" evidence="7">
    <location>
        <begin position="695"/>
        <end position="697"/>
    </location>
</feature>
<feature type="turn" evidence="7">
    <location>
        <begin position="698"/>
        <end position="700"/>
    </location>
</feature>
<feature type="strand" evidence="7">
    <location>
        <begin position="706"/>
        <end position="713"/>
    </location>
</feature>
<feature type="strand" evidence="7">
    <location>
        <begin position="721"/>
        <end position="725"/>
    </location>
</feature>
<feature type="helix" evidence="7">
    <location>
        <begin position="727"/>
        <end position="730"/>
    </location>
</feature>
<evidence type="ECO:0000250" key="1">
    <source>
        <dbReference type="UniProtKB" id="P31434"/>
    </source>
</evidence>
<evidence type="ECO:0000255" key="2"/>
<evidence type="ECO:0000255" key="3">
    <source>
        <dbReference type="PROSITE-ProRule" id="PRU00498"/>
    </source>
</evidence>
<evidence type="ECO:0000269" key="4">
    <source>
    </source>
</evidence>
<evidence type="ECO:0000303" key="5">
    <source>
    </source>
</evidence>
<evidence type="ECO:0000305" key="6"/>
<evidence type="ECO:0007829" key="7">
    <source>
        <dbReference type="PDB" id="6DRU"/>
    </source>
</evidence>